<feature type="chain" id="PRO_1000023810" description="Probable malate:quinone oxidoreductase">
    <location>
        <begin position="1"/>
        <end position="488"/>
    </location>
</feature>
<sequence length="488" mass="54158">MAEATDVVLVGGGIMSATLGVLLKELEPSWEITLIERLEDVALESSNAWNNAGTGHSALCELNYAPLGADGVINPARALNIAEQFHVSRQFWATLVAEGKLEDNSFINAVPHMSLVMNEDHCRYLQKRYDVFKTQKLFENMEFSTDRNKISDWAPLIMRGRDENQPVAANYSAEGTDVDFGRLTRQMVKYLQGKGVKTEFNRHVEDIKRESDGAWVLKTADTRNPDWQLTLRTRFLFLGAGGGALTLLQKSGIPEGKGYGGLPVSGLFFRNSNPETAEQHNAKVYGQASVGAPPMSVPHLDTRNVDGKRHLMFGPYAGFRSNFLKQGSFMDLPLSIHMDNLYPMLRAGWANMPLTKYLLGELRKTKEERFASLLEYYPEANPDDWELITAGQRVQIIKKDSEKGGVLQFGTEIVAHADGSLAALLGASPGASTAVPLMIRLMHQCFPERAPSWEGRLKELVPGYGIKLNENPERADEIIAYTAKVLDI</sequence>
<gene>
    <name evidence="1" type="primary">mqo</name>
    <name type="ordered locus">NGO_1980</name>
</gene>
<reference key="1">
    <citation type="submission" date="2003-03" db="EMBL/GenBank/DDBJ databases">
        <title>The complete genome sequence of Neisseria gonorrhoeae.</title>
        <authorList>
            <person name="Lewis L.A."/>
            <person name="Gillaspy A.F."/>
            <person name="McLaughlin R.E."/>
            <person name="Gipson M."/>
            <person name="Ducey T.F."/>
            <person name="Ownbey T."/>
            <person name="Hartman K."/>
            <person name="Nydick C."/>
            <person name="Carson M.B."/>
            <person name="Vaughn J."/>
            <person name="Thomson C."/>
            <person name="Song L."/>
            <person name="Lin S."/>
            <person name="Yuan X."/>
            <person name="Najar F."/>
            <person name="Zhan M."/>
            <person name="Ren Q."/>
            <person name="Zhu H."/>
            <person name="Qi S."/>
            <person name="Kenton S.M."/>
            <person name="Lai H."/>
            <person name="White J.D."/>
            <person name="Clifton S."/>
            <person name="Roe B.A."/>
            <person name="Dyer D.W."/>
        </authorList>
    </citation>
    <scope>NUCLEOTIDE SEQUENCE [LARGE SCALE GENOMIC DNA]</scope>
    <source>
        <strain>ATCC 700825 / FA 1090</strain>
    </source>
</reference>
<accession>Q5F5E9</accession>
<protein>
    <recommendedName>
        <fullName evidence="1">Probable malate:quinone oxidoreductase</fullName>
        <ecNumber evidence="1">1.1.5.4</ecNumber>
    </recommendedName>
    <alternativeName>
        <fullName evidence="1">MQO</fullName>
    </alternativeName>
    <alternativeName>
        <fullName evidence="1">Malate dehydrogenase [quinone]</fullName>
    </alternativeName>
</protein>
<organism>
    <name type="scientific">Neisseria gonorrhoeae (strain ATCC 700825 / FA 1090)</name>
    <dbReference type="NCBI Taxonomy" id="242231"/>
    <lineage>
        <taxon>Bacteria</taxon>
        <taxon>Pseudomonadati</taxon>
        <taxon>Pseudomonadota</taxon>
        <taxon>Betaproteobacteria</taxon>
        <taxon>Neisseriales</taxon>
        <taxon>Neisseriaceae</taxon>
        <taxon>Neisseria</taxon>
    </lineage>
</organism>
<name>MQO_NEIG1</name>
<proteinExistence type="inferred from homology"/>
<evidence type="ECO:0000255" key="1">
    <source>
        <dbReference type="HAMAP-Rule" id="MF_00212"/>
    </source>
</evidence>
<comment type="catalytic activity">
    <reaction evidence="1">
        <text>(S)-malate + a quinone = a quinol + oxaloacetate</text>
        <dbReference type="Rhea" id="RHEA:46012"/>
        <dbReference type="ChEBI" id="CHEBI:15589"/>
        <dbReference type="ChEBI" id="CHEBI:16452"/>
        <dbReference type="ChEBI" id="CHEBI:24646"/>
        <dbReference type="ChEBI" id="CHEBI:132124"/>
        <dbReference type="EC" id="1.1.5.4"/>
    </reaction>
</comment>
<comment type="cofactor">
    <cofactor evidence="1">
        <name>FAD</name>
        <dbReference type="ChEBI" id="CHEBI:57692"/>
    </cofactor>
</comment>
<comment type="pathway">
    <text evidence="1">Carbohydrate metabolism; tricarboxylic acid cycle; oxaloacetate from (S)-malate (quinone route): step 1/1.</text>
</comment>
<comment type="similarity">
    <text evidence="1">Belongs to the MQO family.</text>
</comment>
<keyword id="KW-0274">FAD</keyword>
<keyword id="KW-0285">Flavoprotein</keyword>
<keyword id="KW-0560">Oxidoreductase</keyword>
<keyword id="KW-1185">Reference proteome</keyword>
<keyword id="KW-0816">Tricarboxylic acid cycle</keyword>
<dbReference type="EC" id="1.1.5.4" evidence="1"/>
<dbReference type="EMBL" id="AE004969">
    <property type="protein sequence ID" value="AAW90588.1"/>
    <property type="molecule type" value="Genomic_DNA"/>
</dbReference>
<dbReference type="RefSeq" id="WP_003686866.1">
    <property type="nucleotide sequence ID" value="NC_002946.2"/>
</dbReference>
<dbReference type="RefSeq" id="YP_209000.1">
    <property type="nucleotide sequence ID" value="NC_002946.2"/>
</dbReference>
<dbReference type="SMR" id="Q5F5E9"/>
<dbReference type="STRING" id="242231.NGO_1980"/>
<dbReference type="KEGG" id="ngo:NGO_1980"/>
<dbReference type="PATRIC" id="fig|242231.10.peg.2389"/>
<dbReference type="HOGENOM" id="CLU_028151_0_0_4"/>
<dbReference type="UniPathway" id="UPA00223">
    <property type="reaction ID" value="UER01008"/>
</dbReference>
<dbReference type="Proteomes" id="UP000000535">
    <property type="component" value="Chromosome"/>
</dbReference>
<dbReference type="GO" id="GO:0047545">
    <property type="term" value="F:2-hydroxyglutarate dehydrogenase activity"/>
    <property type="evidence" value="ECO:0007669"/>
    <property type="project" value="TreeGrafter"/>
</dbReference>
<dbReference type="GO" id="GO:0008924">
    <property type="term" value="F:L-malate dehydrogenase (quinone) activity"/>
    <property type="evidence" value="ECO:0007669"/>
    <property type="project" value="UniProtKB-UniRule"/>
</dbReference>
<dbReference type="GO" id="GO:0006099">
    <property type="term" value="P:tricarboxylic acid cycle"/>
    <property type="evidence" value="ECO:0007669"/>
    <property type="project" value="UniProtKB-UniRule"/>
</dbReference>
<dbReference type="Gene3D" id="3.30.9.10">
    <property type="entry name" value="D-Amino Acid Oxidase, subunit A, domain 2"/>
    <property type="match status" value="1"/>
</dbReference>
<dbReference type="Gene3D" id="3.50.50.60">
    <property type="entry name" value="FAD/NAD(P)-binding domain"/>
    <property type="match status" value="1"/>
</dbReference>
<dbReference type="HAMAP" id="MF_00212">
    <property type="entry name" value="MQO"/>
    <property type="match status" value="1"/>
</dbReference>
<dbReference type="InterPro" id="IPR036188">
    <property type="entry name" value="FAD/NAD-bd_sf"/>
</dbReference>
<dbReference type="InterPro" id="IPR006231">
    <property type="entry name" value="MQO"/>
</dbReference>
<dbReference type="NCBIfam" id="TIGR01320">
    <property type="entry name" value="mal_quin_oxido"/>
    <property type="match status" value="1"/>
</dbReference>
<dbReference type="NCBIfam" id="NF003603">
    <property type="entry name" value="PRK05257.1-1"/>
    <property type="match status" value="1"/>
</dbReference>
<dbReference type="NCBIfam" id="NF003605">
    <property type="entry name" value="PRK05257.1-4"/>
    <property type="match status" value="1"/>
</dbReference>
<dbReference type="NCBIfam" id="NF003606">
    <property type="entry name" value="PRK05257.2-1"/>
    <property type="match status" value="1"/>
</dbReference>
<dbReference type="NCBIfam" id="NF003609">
    <property type="entry name" value="PRK05257.2-5"/>
    <property type="match status" value="1"/>
</dbReference>
<dbReference type="NCBIfam" id="NF003610">
    <property type="entry name" value="PRK05257.3-1"/>
    <property type="match status" value="1"/>
</dbReference>
<dbReference type="NCBIfam" id="NF003611">
    <property type="entry name" value="PRK05257.3-2"/>
    <property type="match status" value="1"/>
</dbReference>
<dbReference type="NCBIfam" id="NF009875">
    <property type="entry name" value="PRK13339.1"/>
    <property type="match status" value="1"/>
</dbReference>
<dbReference type="PANTHER" id="PTHR43104">
    <property type="entry name" value="L-2-HYDROXYGLUTARATE DEHYDROGENASE, MITOCHONDRIAL"/>
    <property type="match status" value="1"/>
</dbReference>
<dbReference type="PANTHER" id="PTHR43104:SF2">
    <property type="entry name" value="L-2-HYDROXYGLUTARATE DEHYDROGENASE, MITOCHONDRIAL"/>
    <property type="match status" value="1"/>
</dbReference>
<dbReference type="Pfam" id="PF06039">
    <property type="entry name" value="Mqo"/>
    <property type="match status" value="1"/>
</dbReference>
<dbReference type="SUPFAM" id="SSF51905">
    <property type="entry name" value="FAD/NAD(P)-binding domain"/>
    <property type="match status" value="1"/>
</dbReference>